<protein>
    <recommendedName>
        <fullName evidence="1">Pup--protein ligase</fullName>
        <ecNumber evidence="1">6.3.1.19</ecNumber>
    </recommendedName>
    <alternativeName>
        <fullName evidence="1">Proteasome accessory factor A</fullName>
    </alternativeName>
    <alternativeName>
        <fullName evidence="1">Pup-conjugating enzyme</fullName>
    </alternativeName>
</protein>
<feature type="chain" id="PRO_0000395919" description="Pup--protein ligase">
    <location>
        <begin position="1"/>
        <end position="453"/>
    </location>
</feature>
<feature type="active site" description="Proton acceptor" evidence="1">
    <location>
        <position position="57"/>
    </location>
</feature>
<feature type="binding site" evidence="1">
    <location>
        <position position="9"/>
    </location>
    <ligand>
        <name>Mg(2+)</name>
        <dbReference type="ChEBI" id="CHEBI:18420"/>
    </ligand>
</feature>
<feature type="binding site" evidence="1">
    <location>
        <position position="53"/>
    </location>
    <ligand>
        <name>ATP</name>
        <dbReference type="ChEBI" id="CHEBI:30616"/>
    </ligand>
</feature>
<feature type="binding site" evidence="1">
    <location>
        <position position="55"/>
    </location>
    <ligand>
        <name>Mg(2+)</name>
        <dbReference type="ChEBI" id="CHEBI:18420"/>
    </ligand>
</feature>
<feature type="binding site" evidence="1">
    <location>
        <position position="63"/>
    </location>
    <ligand>
        <name>Mg(2+)</name>
        <dbReference type="ChEBI" id="CHEBI:18420"/>
    </ligand>
</feature>
<feature type="binding site" evidence="1">
    <location>
        <position position="66"/>
    </location>
    <ligand>
        <name>ATP</name>
        <dbReference type="ChEBI" id="CHEBI:30616"/>
    </ligand>
</feature>
<feature type="binding site" evidence="1">
    <location>
        <position position="420"/>
    </location>
    <ligand>
        <name>ATP</name>
        <dbReference type="ChEBI" id="CHEBI:30616"/>
    </ligand>
</feature>
<proteinExistence type="inferred from homology"/>
<accession>A6W972</accession>
<evidence type="ECO:0000255" key="1">
    <source>
        <dbReference type="HAMAP-Rule" id="MF_02111"/>
    </source>
</evidence>
<gene>
    <name evidence="1" type="primary">pafA</name>
    <name type="ordered locus">Krad_1875</name>
</gene>
<reference key="1">
    <citation type="journal article" date="2008" name="PLoS ONE">
        <title>Survival in nuclear waste, extreme resistance, and potential applications gleaned from the genome sequence of Kineococcus radiotolerans SRS30216.</title>
        <authorList>
            <person name="Bagwell C.E."/>
            <person name="Bhat S."/>
            <person name="Hawkins G.M."/>
            <person name="Smith B.W."/>
            <person name="Biswas T."/>
            <person name="Hoover T.R."/>
            <person name="Saunders E."/>
            <person name="Han C.S."/>
            <person name="Tsodikov O.V."/>
            <person name="Shimkets L.J."/>
        </authorList>
    </citation>
    <scope>NUCLEOTIDE SEQUENCE [LARGE SCALE GENOMIC DNA]</scope>
    <source>
        <strain>ATCC BAA-149 / DSM 14245 / SRS30216</strain>
    </source>
</reference>
<keyword id="KW-0067">ATP-binding</keyword>
<keyword id="KW-0436">Ligase</keyword>
<keyword id="KW-0460">Magnesium</keyword>
<keyword id="KW-0479">Metal-binding</keyword>
<keyword id="KW-0547">Nucleotide-binding</keyword>
<keyword id="KW-1185">Reference proteome</keyword>
<keyword id="KW-0833">Ubl conjugation pathway</keyword>
<dbReference type="EC" id="6.3.1.19" evidence="1"/>
<dbReference type="EMBL" id="CP000750">
    <property type="protein sequence ID" value="ABS03361.1"/>
    <property type="molecule type" value="Genomic_DNA"/>
</dbReference>
<dbReference type="RefSeq" id="WP_011981500.1">
    <property type="nucleotide sequence ID" value="NC_009664.2"/>
</dbReference>
<dbReference type="SMR" id="A6W972"/>
<dbReference type="STRING" id="266940.Krad_1875"/>
<dbReference type="MEROPS" id="U72.001"/>
<dbReference type="KEGG" id="kra:Krad_1875"/>
<dbReference type="eggNOG" id="COG0638">
    <property type="taxonomic scope" value="Bacteria"/>
</dbReference>
<dbReference type="HOGENOM" id="CLU_040524_0_1_11"/>
<dbReference type="OrthoDB" id="9760627at2"/>
<dbReference type="UniPathway" id="UPA00997"/>
<dbReference type="UniPathway" id="UPA00998"/>
<dbReference type="Proteomes" id="UP000001116">
    <property type="component" value="Chromosome"/>
</dbReference>
<dbReference type="GO" id="GO:0005524">
    <property type="term" value="F:ATP binding"/>
    <property type="evidence" value="ECO:0007669"/>
    <property type="project" value="UniProtKB-UniRule"/>
</dbReference>
<dbReference type="GO" id="GO:0016879">
    <property type="term" value="F:ligase activity, forming carbon-nitrogen bonds"/>
    <property type="evidence" value="ECO:0007669"/>
    <property type="project" value="InterPro"/>
</dbReference>
<dbReference type="GO" id="GO:0000287">
    <property type="term" value="F:magnesium ion binding"/>
    <property type="evidence" value="ECO:0007669"/>
    <property type="project" value="UniProtKB-UniRule"/>
</dbReference>
<dbReference type="GO" id="GO:0019787">
    <property type="term" value="F:ubiquitin-like protein transferase activity"/>
    <property type="evidence" value="ECO:0007669"/>
    <property type="project" value="UniProtKB-UniRule"/>
</dbReference>
<dbReference type="GO" id="GO:0019941">
    <property type="term" value="P:modification-dependent protein catabolic process"/>
    <property type="evidence" value="ECO:0007669"/>
    <property type="project" value="UniProtKB-UniRule"/>
</dbReference>
<dbReference type="GO" id="GO:0010498">
    <property type="term" value="P:proteasomal protein catabolic process"/>
    <property type="evidence" value="ECO:0007669"/>
    <property type="project" value="UniProtKB-UniRule"/>
</dbReference>
<dbReference type="GO" id="GO:0070490">
    <property type="term" value="P:protein pupylation"/>
    <property type="evidence" value="ECO:0007669"/>
    <property type="project" value="UniProtKB-UniRule"/>
</dbReference>
<dbReference type="HAMAP" id="MF_02111">
    <property type="entry name" value="Pup_ligase"/>
    <property type="match status" value="1"/>
</dbReference>
<dbReference type="InterPro" id="IPR022279">
    <property type="entry name" value="Pup_ligase"/>
</dbReference>
<dbReference type="InterPro" id="IPR004347">
    <property type="entry name" value="Pup_ligase/deamidase"/>
</dbReference>
<dbReference type="NCBIfam" id="TIGR03686">
    <property type="entry name" value="pupylate_PafA"/>
    <property type="match status" value="1"/>
</dbReference>
<dbReference type="PANTHER" id="PTHR42307">
    <property type="entry name" value="PUP DEAMIDASE/DEPUPYLASE"/>
    <property type="match status" value="1"/>
</dbReference>
<dbReference type="PANTHER" id="PTHR42307:SF3">
    <property type="entry name" value="PUP--PROTEIN LIGASE"/>
    <property type="match status" value="1"/>
</dbReference>
<dbReference type="Pfam" id="PF03136">
    <property type="entry name" value="Pup_ligase"/>
    <property type="match status" value="1"/>
</dbReference>
<dbReference type="PIRSF" id="PIRSF018077">
    <property type="entry name" value="UCP018077"/>
    <property type="match status" value="1"/>
</dbReference>
<name>PAFA_KINRD</name>
<organism>
    <name type="scientific">Kineococcus radiotolerans (strain ATCC BAA-149 / DSM 14245 / SRS30216)</name>
    <dbReference type="NCBI Taxonomy" id="266940"/>
    <lineage>
        <taxon>Bacteria</taxon>
        <taxon>Bacillati</taxon>
        <taxon>Actinomycetota</taxon>
        <taxon>Actinomycetes</taxon>
        <taxon>Kineosporiales</taxon>
        <taxon>Kineosporiaceae</taxon>
        <taxon>Kineococcus</taxon>
    </lineage>
</organism>
<sequence length="453" mass="51774">MDRRIFGLETEFGVTCAFEGQRKLSPDEVARYLFRKVVSWGRSSNVFLKNGARLYLDVGSHPEYATPECDDVRQLVVHDRAGERTLEGLLTDAERRLEEEGIAGEVFLFKNNTDSAGNSYGCHENYLVSRHGEFGKLSDVLIPFLVSRQLIVGAGKVVQTPRGAVYSLSQRADHIWEGVSSATTRSRPIINTRDEPHADAERYRRLHVIVGDSNMSETTTMLKLGATDLVLRMVEEGVVLREMTMENPIRAIREISHDMTGRKPVRLANGREASALEIQEEYLEKAKEFVESRGLQTPTIKRVLDLWERALRAVATQDFSLVDREVDWVIKKKLLDRYMAKHDLPLTSPRIARLDLAYHDIHRKRGLHYMLAERGMAERVCSDIEVFEALSVPPQTTRAKLRGDFVRAAQEKRRDFTVDWVHLKLNDQAQRTVLCKDPFKAVDDRVERLIDSM</sequence>
<comment type="function">
    <text evidence="1">Catalyzes the covalent attachment of the prokaryotic ubiquitin-like protein modifier Pup to the proteasomal substrate proteins, thereby targeting them for proteasomal degradation. This tagging system is termed pupylation. The ligation reaction involves the side-chain carboxylate of the C-terminal glutamate of Pup and the side-chain amino group of a substrate lysine.</text>
</comment>
<comment type="catalytic activity">
    <reaction evidence="1">
        <text>ATP + [prokaryotic ubiquitin-like protein]-L-glutamate + [protein]-L-lysine = ADP + phosphate + N(6)-([prokaryotic ubiquitin-like protein]-gamma-L-glutamyl)-[protein]-L-lysine.</text>
        <dbReference type="EC" id="6.3.1.19"/>
    </reaction>
</comment>
<comment type="pathway">
    <text evidence="1">Protein degradation; proteasomal Pup-dependent pathway.</text>
</comment>
<comment type="pathway">
    <text evidence="1">Protein modification; protein pupylation.</text>
</comment>
<comment type="miscellaneous">
    <text evidence="1">The reaction mechanism probably proceeds via the activation of Pup by phosphorylation of its C-terminal glutamate, which is then subject to nucleophilic attack by the substrate lysine, resulting in an isopeptide bond and the release of phosphate as a good leaving group.</text>
</comment>
<comment type="similarity">
    <text evidence="1">Belongs to the Pup ligase/Pup deamidase family. Pup-conjugating enzyme subfamily.</text>
</comment>